<sequence>VAAIQTVLG</sequence>
<comment type="function">
    <text evidence="1">Has endoglucanase activity on substrates containing beta-1,4 glycosidic bonds, like in carboxymethylcellulose (CMC).</text>
</comment>
<comment type="catalytic activity">
    <reaction evidence="1">
        <text>Endohydrolysis of (1-&gt;4)-beta-D-glucosidic linkages in cellulose, lichenin and cereal beta-D-glucans.</text>
        <dbReference type="EC" id="3.2.1.4"/>
    </reaction>
</comment>
<comment type="biophysicochemical properties">
    <kinetics>
        <KM evidence="1">1.134 mM for carboxymethylcellulose</KM>
    </kinetics>
    <phDependence>
        <text evidence="1">Optimum pH is 4.0.</text>
    </phDependence>
    <temperatureDependence>
        <text evidence="1">Optimum temperature is 30 degrees Celsius.</text>
    </temperatureDependence>
</comment>
<comment type="subcellular location">
    <subcellularLocation>
        <location evidence="1">Secreted</location>
    </subcellularLocation>
</comment>
<comment type="induction">
    <text evidence="1">Induced by Co(2+), Ba(2+), Mn(2+), Mg(2+) and Cu(2+) ions. Repressed by Hg(2+) ions and methanol.</text>
</comment>
<protein>
    <recommendedName>
        <fullName>Endo-beta-1,4-glucanase</fullName>
        <shortName>Endoglucanase</shortName>
        <ecNumber evidence="1">3.2.1.4</ecNumber>
    </recommendedName>
    <alternativeName>
        <fullName>Carboxymethylcellulase</fullName>
    </alternativeName>
    <alternativeName>
        <fullName evidence="2">Cellulase</fullName>
    </alternativeName>
</protein>
<reference evidence="3" key="1">
    <citation type="submission" date="2012-12" db="UniProtKB">
        <title>Production, purification and characterization of cellulases from wild and mutant strains of Aspergillus versicolor KIBGE-IB37.</title>
        <authorList>
            <person name="Sofia Q."/>
            <person name="Sidra P."/>
            <person name="Faiza S."/>
            <person name="Afsheen A."/>
            <person name="Shah Ali Ul Q."/>
        </authorList>
    </citation>
    <scope>PROTEIN SEQUENCE</scope>
    <scope>FUNCTION</scope>
    <scope>CATALYTIC ACTIVITY</scope>
    <scope>BIOPHYSICOCHEMICAL PROPERTIES</scope>
    <scope>SUBCELLULAR LOCATION</scope>
    <scope>INDUCTION</scope>
    <source>
        <strain evidence="1">KIBGE-IB37</strain>
    </source>
</reference>
<name>CELL_ASPVE</name>
<keyword id="KW-0119">Carbohydrate metabolism</keyword>
<keyword id="KW-0136">Cellulose degradation</keyword>
<keyword id="KW-0903">Direct protein sequencing</keyword>
<keyword id="KW-0326">Glycosidase</keyword>
<keyword id="KW-0378">Hydrolase</keyword>
<keyword id="KW-0624">Polysaccharide degradation</keyword>
<keyword id="KW-0964">Secreted</keyword>
<feature type="chain" id="PRO_0000425581" description="Endo-beta-1,4-glucanase">
    <location>
        <begin position="1"/>
        <end position="9" status="greater than"/>
    </location>
</feature>
<feature type="non-terminal residue" evidence="2">
    <location>
        <position position="9"/>
    </location>
</feature>
<accession>C0HJH0</accession>
<dbReference type="EC" id="3.2.1.4" evidence="1"/>
<dbReference type="GO" id="GO:0005576">
    <property type="term" value="C:extracellular region"/>
    <property type="evidence" value="ECO:0007669"/>
    <property type="project" value="UniProtKB-SubCell"/>
</dbReference>
<dbReference type="GO" id="GO:0008810">
    <property type="term" value="F:cellulase activity"/>
    <property type="evidence" value="ECO:0007669"/>
    <property type="project" value="UniProtKB-EC"/>
</dbReference>
<dbReference type="GO" id="GO:0030245">
    <property type="term" value="P:cellulose catabolic process"/>
    <property type="evidence" value="ECO:0007669"/>
    <property type="project" value="UniProtKB-KW"/>
</dbReference>
<organism>
    <name type="scientific">Aspergillus versicolor</name>
    <dbReference type="NCBI Taxonomy" id="46472"/>
    <lineage>
        <taxon>Eukaryota</taxon>
        <taxon>Fungi</taxon>
        <taxon>Dikarya</taxon>
        <taxon>Ascomycota</taxon>
        <taxon>Pezizomycotina</taxon>
        <taxon>Eurotiomycetes</taxon>
        <taxon>Eurotiomycetidae</taxon>
        <taxon>Eurotiales</taxon>
        <taxon>Aspergillaceae</taxon>
        <taxon>Aspergillus</taxon>
        <taxon>Aspergillus subgen. Nidulantes</taxon>
    </lineage>
</organism>
<proteinExistence type="evidence at protein level"/>
<evidence type="ECO:0000269" key="1">
    <source ref="1"/>
</evidence>
<evidence type="ECO:0000303" key="2">
    <source ref="1"/>
</evidence>
<evidence type="ECO:0000305" key="3"/>